<organism>
    <name type="scientific">Escherichia coli O139:H28 (strain E24377A / ETEC)</name>
    <dbReference type="NCBI Taxonomy" id="331111"/>
    <lineage>
        <taxon>Bacteria</taxon>
        <taxon>Pseudomonadati</taxon>
        <taxon>Pseudomonadota</taxon>
        <taxon>Gammaproteobacteria</taxon>
        <taxon>Enterobacterales</taxon>
        <taxon>Enterobacteriaceae</taxon>
        <taxon>Escherichia</taxon>
    </lineage>
</organism>
<keyword id="KW-0963">Cytoplasm</keyword>
<keyword id="KW-1185">Reference proteome</keyword>
<keyword id="KW-0704">Schiff base</keyword>
<keyword id="KW-0808">Transferase</keyword>
<sequence length="291" mass="31851">MADLDDIKDGKDFRTDQPQQNIPFTLKGCGALDWGMQSRLSRIFNPKTGNTVMLAFDHGYFQGPTTGLERIDINIAPLFEHADVLMCTRGILRSVVPPATNKPVVLRASGANSILAELSNEAVALSMDDAVRLNSCAVAAQVYIGSEYEHQSIKNIIQLVDAGMKVGMPTMAVTGVGKDMVRDQRYFSLATRIAAEMGAQIIKTYYVEKGFERIVAGCPVPIVIAGGKKLPEREALEMCWQAIDQGASGVDMGRNIFQSDHPVAMMKAVQAVVHHNETADRAYELYLSEKQ</sequence>
<proteinExistence type="inferred from homology"/>
<evidence type="ECO:0000255" key="1">
    <source>
        <dbReference type="HAMAP-Rule" id="MF_02052"/>
    </source>
</evidence>
<name>LSRF_ECO24</name>
<gene>
    <name evidence="1" type="primary">lsrF</name>
    <name type="ordered locus">EcE24377A_1717</name>
</gene>
<accession>A7ZLX4</accession>
<protein>
    <recommendedName>
        <fullName evidence="1">3-hydroxy-5-phosphonooxypentane-2,4-dione thiolase</fullName>
        <ecNumber evidence="1">2.3.1.245</ecNumber>
    </recommendedName>
</protein>
<dbReference type="EC" id="2.3.1.245" evidence="1"/>
<dbReference type="EMBL" id="CP000800">
    <property type="protein sequence ID" value="ABV18111.1"/>
    <property type="molecule type" value="Genomic_DNA"/>
</dbReference>
<dbReference type="RefSeq" id="WP_000774189.1">
    <property type="nucleotide sequence ID" value="NC_009801.1"/>
</dbReference>
<dbReference type="SMR" id="A7ZLX4"/>
<dbReference type="KEGG" id="ecw:EcE24377A_1717"/>
<dbReference type="HOGENOM" id="CLU_057069_1_0_6"/>
<dbReference type="Proteomes" id="UP000001122">
    <property type="component" value="Chromosome"/>
</dbReference>
<dbReference type="GO" id="GO:0005737">
    <property type="term" value="C:cytoplasm"/>
    <property type="evidence" value="ECO:0007669"/>
    <property type="project" value="UniProtKB-SubCell"/>
</dbReference>
<dbReference type="GO" id="GO:0016747">
    <property type="term" value="F:acyltransferase activity, transferring groups other than amino-acyl groups"/>
    <property type="evidence" value="ECO:0007669"/>
    <property type="project" value="UniProtKB-UniRule"/>
</dbReference>
<dbReference type="GO" id="GO:0004332">
    <property type="term" value="F:fructose-bisphosphate aldolase activity"/>
    <property type="evidence" value="ECO:0007669"/>
    <property type="project" value="InterPro"/>
</dbReference>
<dbReference type="CDD" id="cd00958">
    <property type="entry name" value="DhnA"/>
    <property type="match status" value="1"/>
</dbReference>
<dbReference type="FunFam" id="3.20.20.70:FF:000168">
    <property type="entry name" value="3-hydroxy-5-phosphonooxypentane-2,4-dione thiolase"/>
    <property type="match status" value="1"/>
</dbReference>
<dbReference type="Gene3D" id="3.20.20.70">
    <property type="entry name" value="Aldolase class I"/>
    <property type="match status" value="1"/>
</dbReference>
<dbReference type="HAMAP" id="MF_02052">
    <property type="entry name" value="LsrF"/>
    <property type="match status" value="1"/>
</dbReference>
<dbReference type="InterPro" id="IPR013785">
    <property type="entry name" value="Aldolase_TIM"/>
</dbReference>
<dbReference type="InterPro" id="IPR002915">
    <property type="entry name" value="DeoC/FbaB/LacD_aldolase"/>
</dbReference>
<dbReference type="InterPro" id="IPR050456">
    <property type="entry name" value="DeoC/FbaB_aldolase"/>
</dbReference>
<dbReference type="InterPro" id="IPR041720">
    <property type="entry name" value="FbaB-like"/>
</dbReference>
<dbReference type="InterPro" id="IPR033673">
    <property type="entry name" value="LsrF"/>
</dbReference>
<dbReference type="NCBIfam" id="NF006081">
    <property type="entry name" value="PRK08227.1"/>
    <property type="match status" value="1"/>
</dbReference>
<dbReference type="PANTHER" id="PTHR47916:SF1">
    <property type="entry name" value="3-HYDROXY-5-PHOSPHONOOXYPENTANE-2,4-DIONE THIOLASE"/>
    <property type="match status" value="1"/>
</dbReference>
<dbReference type="PANTHER" id="PTHR47916">
    <property type="entry name" value="FRUCTOSE-BISPHOSPHATE ALDOLASE CLASS 1"/>
    <property type="match status" value="1"/>
</dbReference>
<dbReference type="Pfam" id="PF01791">
    <property type="entry name" value="DeoC"/>
    <property type="match status" value="1"/>
</dbReference>
<dbReference type="PIRSF" id="PIRSF038992">
    <property type="entry name" value="Aldolase_Ia"/>
    <property type="match status" value="1"/>
</dbReference>
<dbReference type="SMART" id="SM01133">
    <property type="entry name" value="DeoC"/>
    <property type="match status" value="1"/>
</dbReference>
<dbReference type="SUPFAM" id="SSF51569">
    <property type="entry name" value="Aldolase"/>
    <property type="match status" value="1"/>
</dbReference>
<feature type="chain" id="PRO_0000351521" description="3-hydroxy-5-phosphonooxypentane-2,4-dione thiolase">
    <location>
        <begin position="1"/>
        <end position="291"/>
    </location>
</feature>
<feature type="active site" description="Schiff-base intermediate with substrate" evidence="1">
    <location>
        <position position="203"/>
    </location>
</feature>
<reference key="1">
    <citation type="journal article" date="2008" name="J. Bacteriol.">
        <title>The pangenome structure of Escherichia coli: comparative genomic analysis of E. coli commensal and pathogenic isolates.</title>
        <authorList>
            <person name="Rasko D.A."/>
            <person name="Rosovitz M.J."/>
            <person name="Myers G.S.A."/>
            <person name="Mongodin E.F."/>
            <person name="Fricke W.F."/>
            <person name="Gajer P."/>
            <person name="Crabtree J."/>
            <person name="Sebaihia M."/>
            <person name="Thomson N.R."/>
            <person name="Chaudhuri R."/>
            <person name="Henderson I.R."/>
            <person name="Sperandio V."/>
            <person name="Ravel J."/>
        </authorList>
    </citation>
    <scope>NUCLEOTIDE SEQUENCE [LARGE SCALE GENOMIC DNA]</scope>
    <source>
        <strain>E24377A / ETEC</strain>
    </source>
</reference>
<comment type="function">
    <text evidence="1">Involved in the degradation of phospho-AI-2, thereby terminating induction of the lsr operon and closing the AI-2 signaling cycle. Catalyzes the transfer of an acetyl moiety from 3-hydroxy-5-phosphonooxypentane-2,4-dione to CoA to form glycerone phosphate and acetyl-CoA.</text>
</comment>
<comment type="catalytic activity">
    <reaction evidence="1">
        <text>dihydroxyacetone phosphate + acetyl-CoA = 3-hydroxy-2,4-dioxopentyl phosphate + CoA</text>
        <dbReference type="Rhea" id="RHEA:44736"/>
        <dbReference type="ChEBI" id="CHEBI:57287"/>
        <dbReference type="ChEBI" id="CHEBI:57288"/>
        <dbReference type="ChEBI" id="CHEBI:57642"/>
        <dbReference type="ChEBI" id="CHEBI:84359"/>
        <dbReference type="EC" id="2.3.1.245"/>
    </reaction>
</comment>
<comment type="subunit">
    <text evidence="1">Homodecamer.</text>
</comment>
<comment type="subcellular location">
    <subcellularLocation>
        <location evidence="1">Cytoplasm</location>
    </subcellularLocation>
</comment>
<comment type="similarity">
    <text evidence="1">Belongs to the DeoC/FbaB aldolase family.</text>
</comment>